<keyword id="KW-0067">ATP-binding</keyword>
<keyword id="KW-0173">Coenzyme A biosynthesis</keyword>
<keyword id="KW-0963">Cytoplasm</keyword>
<keyword id="KW-0418">Kinase</keyword>
<keyword id="KW-0547">Nucleotide-binding</keyword>
<keyword id="KW-0808">Transferase</keyword>
<name>COAA_STRP3</name>
<dbReference type="EC" id="2.7.1.33"/>
<dbReference type="EMBL" id="AE014074">
    <property type="protein sequence ID" value="AAM79478.1"/>
    <property type="molecule type" value="Genomic_DNA"/>
</dbReference>
<dbReference type="RefSeq" id="WP_011054527.1">
    <property type="nucleotide sequence ID" value="NC_004070.1"/>
</dbReference>
<dbReference type="SMR" id="P0DA40"/>
<dbReference type="KEGG" id="spg:SpyM3_0871"/>
<dbReference type="HOGENOM" id="CLU_053818_1_1_9"/>
<dbReference type="UniPathway" id="UPA00241">
    <property type="reaction ID" value="UER00352"/>
</dbReference>
<dbReference type="Proteomes" id="UP000000564">
    <property type="component" value="Chromosome"/>
</dbReference>
<dbReference type="GO" id="GO:0005737">
    <property type="term" value="C:cytoplasm"/>
    <property type="evidence" value="ECO:0007669"/>
    <property type="project" value="UniProtKB-SubCell"/>
</dbReference>
<dbReference type="GO" id="GO:0005524">
    <property type="term" value="F:ATP binding"/>
    <property type="evidence" value="ECO:0007669"/>
    <property type="project" value="UniProtKB-UniRule"/>
</dbReference>
<dbReference type="GO" id="GO:0004594">
    <property type="term" value="F:pantothenate kinase activity"/>
    <property type="evidence" value="ECO:0007669"/>
    <property type="project" value="UniProtKB-UniRule"/>
</dbReference>
<dbReference type="GO" id="GO:0015937">
    <property type="term" value="P:coenzyme A biosynthetic process"/>
    <property type="evidence" value="ECO:0007669"/>
    <property type="project" value="UniProtKB-UniRule"/>
</dbReference>
<dbReference type="CDD" id="cd02025">
    <property type="entry name" value="PanK"/>
    <property type="match status" value="1"/>
</dbReference>
<dbReference type="Gene3D" id="3.40.50.300">
    <property type="entry name" value="P-loop containing nucleotide triphosphate hydrolases"/>
    <property type="match status" value="1"/>
</dbReference>
<dbReference type="HAMAP" id="MF_00215">
    <property type="entry name" value="Pantothen_kinase_1"/>
    <property type="match status" value="1"/>
</dbReference>
<dbReference type="InterPro" id="IPR027417">
    <property type="entry name" value="P-loop_NTPase"/>
</dbReference>
<dbReference type="InterPro" id="IPR004566">
    <property type="entry name" value="PanK"/>
</dbReference>
<dbReference type="InterPro" id="IPR006083">
    <property type="entry name" value="PRK/URK"/>
</dbReference>
<dbReference type="NCBIfam" id="TIGR00554">
    <property type="entry name" value="panK_bact"/>
    <property type="match status" value="1"/>
</dbReference>
<dbReference type="PANTHER" id="PTHR10285">
    <property type="entry name" value="URIDINE KINASE"/>
    <property type="match status" value="1"/>
</dbReference>
<dbReference type="Pfam" id="PF00485">
    <property type="entry name" value="PRK"/>
    <property type="match status" value="1"/>
</dbReference>
<dbReference type="PIRSF" id="PIRSF000545">
    <property type="entry name" value="Pantothenate_kin"/>
    <property type="match status" value="1"/>
</dbReference>
<dbReference type="SUPFAM" id="SSF52540">
    <property type="entry name" value="P-loop containing nucleoside triphosphate hydrolases"/>
    <property type="match status" value="1"/>
</dbReference>
<protein>
    <recommendedName>
        <fullName>Pantothenate kinase</fullName>
        <ecNumber>2.7.1.33</ecNumber>
    </recommendedName>
    <alternativeName>
        <fullName>Pantothenic acid kinase</fullName>
    </alternativeName>
</protein>
<feature type="chain" id="PRO_0000194457" description="Pantothenate kinase">
    <location>
        <begin position="1"/>
        <end position="306"/>
    </location>
</feature>
<feature type="binding site" evidence="2">
    <location>
        <begin position="91"/>
        <end position="98"/>
    </location>
    <ligand>
        <name>ATP</name>
        <dbReference type="ChEBI" id="CHEBI:30616"/>
    </ligand>
</feature>
<proteinExistence type="inferred from homology"/>
<reference key="1">
    <citation type="journal article" date="2002" name="Proc. Natl. Acad. Sci. U.S.A.">
        <title>Genome sequence of a serotype M3 strain of group A Streptococcus: phage-encoded toxins, the high-virulence phenotype, and clone emergence.</title>
        <authorList>
            <person name="Beres S.B."/>
            <person name="Sylva G.L."/>
            <person name="Barbian K.D."/>
            <person name="Lei B."/>
            <person name="Hoff J.S."/>
            <person name="Mammarella N.D."/>
            <person name="Liu M.-Y."/>
            <person name="Smoot J.C."/>
            <person name="Porcella S.F."/>
            <person name="Parkins L.D."/>
            <person name="Campbell D.S."/>
            <person name="Smith T.M."/>
            <person name="McCormick J.K."/>
            <person name="Leung D.Y.M."/>
            <person name="Schlievert P.M."/>
            <person name="Musser J.M."/>
        </authorList>
    </citation>
    <scope>NUCLEOTIDE SEQUENCE [LARGE SCALE GENOMIC DNA]</scope>
    <source>
        <strain>ATCC BAA-595 / MGAS315</strain>
    </source>
</reference>
<gene>
    <name type="primary">coaA</name>
    <name type="ordered locus">SpyM3_0871</name>
</gene>
<accession>P0DA40</accession>
<accession>Q8K7C7</accession>
<evidence type="ECO:0000250" key="1"/>
<evidence type="ECO:0000255" key="2"/>
<evidence type="ECO:0000305" key="3"/>
<comment type="catalytic activity">
    <reaction>
        <text>(R)-pantothenate + ATP = (R)-4'-phosphopantothenate + ADP + H(+)</text>
        <dbReference type="Rhea" id="RHEA:16373"/>
        <dbReference type="ChEBI" id="CHEBI:10986"/>
        <dbReference type="ChEBI" id="CHEBI:15378"/>
        <dbReference type="ChEBI" id="CHEBI:29032"/>
        <dbReference type="ChEBI" id="CHEBI:30616"/>
        <dbReference type="ChEBI" id="CHEBI:456216"/>
        <dbReference type="EC" id="2.7.1.33"/>
    </reaction>
</comment>
<comment type="pathway">
    <text>Cofactor biosynthesis; coenzyme A biosynthesis; CoA from (R)-pantothenate: step 1/5.</text>
</comment>
<comment type="subcellular location">
    <subcellularLocation>
        <location evidence="1">Cytoplasm</location>
    </subcellularLocation>
</comment>
<comment type="similarity">
    <text evidence="3">Belongs to the prokaryotic pantothenate kinase family.</text>
</comment>
<sequence length="306" mass="35609">MSNKFINFEKISRESWKTLHQKAKALLTQEELKSITSLNDNISINDVIDIYLPLINLIQVYKIAQENLSFSKSLFLKKDIQLRPFIIGISGSVAVGKSTTSRLLQLLLSRTHPNSQVELVTTDGFLYPNQFLIEQGLLNRKGFPESYNMELLLDFLDSIKNGQTAFAPVYSHDIYDIIPNQKQSFNNPDFLIVEGINVFQNQQNNRLYMSDYFDFSIYIDADSSHIETWYIERFLSILKLAKRDPHNYYAQYAQLPRSEAIAFARNVWKTVNLENLEKFIEPTRNRAELILHKSADHKIDEIYLKK</sequence>
<organism>
    <name type="scientific">Streptococcus pyogenes serotype M3 (strain ATCC BAA-595 / MGAS315)</name>
    <dbReference type="NCBI Taxonomy" id="198466"/>
    <lineage>
        <taxon>Bacteria</taxon>
        <taxon>Bacillati</taxon>
        <taxon>Bacillota</taxon>
        <taxon>Bacilli</taxon>
        <taxon>Lactobacillales</taxon>
        <taxon>Streptococcaceae</taxon>
        <taxon>Streptococcus</taxon>
    </lineage>
</organism>